<organism>
    <name type="scientific">Escherichia coli O1:K1 / APEC</name>
    <dbReference type="NCBI Taxonomy" id="405955"/>
    <lineage>
        <taxon>Bacteria</taxon>
        <taxon>Pseudomonadati</taxon>
        <taxon>Pseudomonadota</taxon>
        <taxon>Gammaproteobacteria</taxon>
        <taxon>Enterobacterales</taxon>
        <taxon>Enterobacteriaceae</taxon>
        <taxon>Escherichia</taxon>
    </lineage>
</organism>
<sequence>MVNNMTDLTAQEPAWQTRDHLDDPVIGELRNRFGPDAFTVQATRTGVPVVWIKREQLLEVGDFLKKLPKPYVMLFDLHGMDERLRTHREGLPAADFSVFYHLISIDRNRDIMLKVALAENDLHVPTFTKLFPNANWYERETWDLFGITFDGHPNLRRIMMPQTWKGHPLRKDYPARATEFSPFELTKAKQDLEMEALTFKPEEWGMKRGTENEDFMFLNLGPNHPSAHGAFRIVLQLDGEEIVDCVPDIGYHHRGAEKMGERQSWHSYIPYTDRIEYLGGCVNEMPYVLAVEKLAGITVPDRVNVIRVMLSELFRINSHLLYISTFIQDVGAMTPVFFAFTDRQKIYDLVEAITGFRMHPAWFRIGGVAHDLPRGWDRLLREFLDWMPKRLASYEKAALQNTILKGRSQGVAAYGAKEALEWGTTGAGLRATGIDFDVRKARPYSGYENFDFEIPVGGGVSDCYTRVMLKVEELRQSLRILEQCLNNMPEGPFKADHPLTTPPPKERTLQHIETLITHFLQVSWGPVMPANESFQMVEATKGINSYYLTSDGSTMSYRTRIRTPSYAHLQQIPAAIRGSLVSDLIVYLGSIDFVMSDVDR</sequence>
<accession>A1ADD4</accession>
<evidence type="ECO:0000255" key="1">
    <source>
        <dbReference type="HAMAP-Rule" id="MF_01359"/>
    </source>
</evidence>
<protein>
    <recommendedName>
        <fullName evidence="1">NADH-quinone oxidoreductase subunit C/D</fullName>
        <ecNumber evidence="1">7.1.1.-</ecNumber>
    </recommendedName>
    <alternativeName>
        <fullName evidence="1">NADH dehydrogenase I subunit C/D</fullName>
    </alternativeName>
    <alternativeName>
        <fullName evidence="1">NDH-1 subunit C/D</fullName>
    </alternativeName>
</protein>
<feature type="chain" id="PRO_0000358638" description="NADH-quinone oxidoreductase subunit C/D">
    <location>
        <begin position="1"/>
        <end position="600"/>
    </location>
</feature>
<feature type="region of interest" description="NADH dehydrogenase I subunit C" evidence="1">
    <location>
        <begin position="1"/>
        <end position="190"/>
    </location>
</feature>
<feature type="region of interest" description="NADH dehydrogenase I subunit D" evidence="1">
    <location>
        <begin position="214"/>
        <end position="600"/>
    </location>
</feature>
<proteinExistence type="inferred from homology"/>
<dbReference type="EC" id="7.1.1.-" evidence="1"/>
<dbReference type="EMBL" id="CP000468">
    <property type="protein sequence ID" value="ABJ01674.1"/>
    <property type="molecule type" value="Genomic_DNA"/>
</dbReference>
<dbReference type="RefSeq" id="WP_000247881.1">
    <property type="nucleotide sequence ID" value="NZ_CADILS010000025.1"/>
</dbReference>
<dbReference type="SMR" id="A1ADD4"/>
<dbReference type="KEGG" id="ecv:APECO1_4279"/>
<dbReference type="HOGENOM" id="CLU_015134_3_2_6"/>
<dbReference type="Proteomes" id="UP000008216">
    <property type="component" value="Chromosome"/>
</dbReference>
<dbReference type="GO" id="GO:0030964">
    <property type="term" value="C:NADH dehydrogenase complex"/>
    <property type="evidence" value="ECO:0007669"/>
    <property type="project" value="InterPro"/>
</dbReference>
<dbReference type="GO" id="GO:0005886">
    <property type="term" value="C:plasma membrane"/>
    <property type="evidence" value="ECO:0007669"/>
    <property type="project" value="UniProtKB-SubCell"/>
</dbReference>
<dbReference type="GO" id="GO:0051287">
    <property type="term" value="F:NAD binding"/>
    <property type="evidence" value="ECO:0007669"/>
    <property type="project" value="InterPro"/>
</dbReference>
<dbReference type="GO" id="GO:0008137">
    <property type="term" value="F:NADH dehydrogenase (ubiquinone) activity"/>
    <property type="evidence" value="ECO:0007669"/>
    <property type="project" value="InterPro"/>
</dbReference>
<dbReference type="GO" id="GO:0050136">
    <property type="term" value="F:NADH:ubiquinone reductase (non-electrogenic) activity"/>
    <property type="evidence" value="ECO:0007669"/>
    <property type="project" value="UniProtKB-UniRule"/>
</dbReference>
<dbReference type="GO" id="GO:0048038">
    <property type="term" value="F:quinone binding"/>
    <property type="evidence" value="ECO:0007669"/>
    <property type="project" value="UniProtKB-KW"/>
</dbReference>
<dbReference type="FunFam" id="1.10.645.10:FF:000001">
    <property type="entry name" value="NADH-quinone oxidoreductase subunit C/D"/>
    <property type="match status" value="1"/>
</dbReference>
<dbReference type="FunFam" id="3.30.460.80:FF:000001">
    <property type="entry name" value="NADH-quinone oxidoreductase subunit C/D"/>
    <property type="match status" value="1"/>
</dbReference>
<dbReference type="Gene3D" id="1.10.645.10">
    <property type="entry name" value="Cytochrome-c3 Hydrogenase, chain B"/>
    <property type="match status" value="1"/>
</dbReference>
<dbReference type="Gene3D" id="3.30.460.80">
    <property type="entry name" value="NADH:ubiquinone oxidoreductase, 30kDa subunit"/>
    <property type="match status" value="1"/>
</dbReference>
<dbReference type="HAMAP" id="MF_01357">
    <property type="entry name" value="NDH1_NuoC"/>
    <property type="match status" value="1"/>
</dbReference>
<dbReference type="HAMAP" id="MF_01359">
    <property type="entry name" value="NDH1_NuoCD_1"/>
    <property type="match status" value="1"/>
</dbReference>
<dbReference type="HAMAP" id="MF_01358">
    <property type="entry name" value="NDH1_NuoD"/>
    <property type="match status" value="1"/>
</dbReference>
<dbReference type="InterPro" id="IPR010218">
    <property type="entry name" value="NADH_DH_suC"/>
</dbReference>
<dbReference type="InterPro" id="IPR023062">
    <property type="entry name" value="NADH_DH_suCD"/>
</dbReference>
<dbReference type="InterPro" id="IPR001135">
    <property type="entry name" value="NADH_Q_OxRdtase_suD"/>
</dbReference>
<dbReference type="InterPro" id="IPR037232">
    <property type="entry name" value="NADH_quin_OxRdtase_su_C/D-like"/>
</dbReference>
<dbReference type="InterPro" id="IPR001268">
    <property type="entry name" value="NADH_UbQ_OxRdtase_30kDa_su"/>
</dbReference>
<dbReference type="InterPro" id="IPR014029">
    <property type="entry name" value="NADH_UbQ_OxRdtase_49kDa_CS"/>
</dbReference>
<dbReference type="InterPro" id="IPR020396">
    <property type="entry name" value="NADH_UbQ_OxRdtase_CS"/>
</dbReference>
<dbReference type="InterPro" id="IPR022885">
    <property type="entry name" value="NDH1_su_D/H"/>
</dbReference>
<dbReference type="InterPro" id="IPR029014">
    <property type="entry name" value="NiFe-Hase_large"/>
</dbReference>
<dbReference type="NCBIfam" id="TIGR01961">
    <property type="entry name" value="NuoC_fam"/>
    <property type="match status" value="1"/>
</dbReference>
<dbReference type="NCBIfam" id="TIGR01962">
    <property type="entry name" value="NuoD"/>
    <property type="match status" value="1"/>
</dbReference>
<dbReference type="NCBIfam" id="NF004739">
    <property type="entry name" value="PRK06075.1"/>
    <property type="match status" value="1"/>
</dbReference>
<dbReference type="NCBIfam" id="NF008728">
    <property type="entry name" value="PRK11742.1"/>
    <property type="match status" value="1"/>
</dbReference>
<dbReference type="PANTHER" id="PTHR11993:SF45">
    <property type="entry name" value="NADH-QUINONE OXIDOREDUCTASE SUBUNIT C_D"/>
    <property type="match status" value="1"/>
</dbReference>
<dbReference type="PANTHER" id="PTHR11993">
    <property type="entry name" value="NADH-UBIQUINONE OXIDOREDUCTASE 49 KDA SUBUNIT"/>
    <property type="match status" value="1"/>
</dbReference>
<dbReference type="Pfam" id="PF00329">
    <property type="entry name" value="Complex1_30kDa"/>
    <property type="match status" value="1"/>
</dbReference>
<dbReference type="Pfam" id="PF00346">
    <property type="entry name" value="Complex1_49kDa"/>
    <property type="match status" value="1"/>
</dbReference>
<dbReference type="SUPFAM" id="SSF56762">
    <property type="entry name" value="HydB/Nqo4-like"/>
    <property type="match status" value="1"/>
</dbReference>
<dbReference type="SUPFAM" id="SSF143243">
    <property type="entry name" value="Nqo5-like"/>
    <property type="match status" value="1"/>
</dbReference>
<dbReference type="PROSITE" id="PS00542">
    <property type="entry name" value="COMPLEX1_30K"/>
    <property type="match status" value="1"/>
</dbReference>
<dbReference type="PROSITE" id="PS00535">
    <property type="entry name" value="COMPLEX1_49K"/>
    <property type="match status" value="1"/>
</dbReference>
<comment type="function">
    <text evidence="1">NDH-1 shuttles electrons from NADH, via FMN and iron-sulfur (Fe-S) centers, to quinones in the respiratory chain. The immediate electron acceptor for the enzyme in this species is believed to be ubiquinone. Couples the redox reaction to proton translocation (for every two electrons transferred, four hydrogen ions are translocated across the cytoplasmic membrane), and thus conserves the redox energy in a proton gradient.</text>
</comment>
<comment type="catalytic activity">
    <reaction evidence="1">
        <text>a quinone + NADH + 5 H(+)(in) = a quinol + NAD(+) + 4 H(+)(out)</text>
        <dbReference type="Rhea" id="RHEA:57888"/>
        <dbReference type="ChEBI" id="CHEBI:15378"/>
        <dbReference type="ChEBI" id="CHEBI:24646"/>
        <dbReference type="ChEBI" id="CHEBI:57540"/>
        <dbReference type="ChEBI" id="CHEBI:57945"/>
        <dbReference type="ChEBI" id="CHEBI:132124"/>
    </reaction>
</comment>
<comment type="subunit">
    <text evidence="1">NDH-1 is composed of 13 different subunits. Subunits NuoB, CD, E, F, and G constitute the peripheral sector of the complex.</text>
</comment>
<comment type="subcellular location">
    <subcellularLocation>
        <location evidence="1">Cell inner membrane</location>
        <topology evidence="1">Peripheral membrane protein</topology>
        <orientation evidence="1">Cytoplasmic side</orientation>
    </subcellularLocation>
</comment>
<comment type="similarity">
    <text evidence="1">In the N-terminal section; belongs to the complex I 30 kDa subunit family.</text>
</comment>
<comment type="similarity">
    <text evidence="1">In the C-terminal section; belongs to the complex I 49 kDa subunit family.</text>
</comment>
<keyword id="KW-0997">Cell inner membrane</keyword>
<keyword id="KW-1003">Cell membrane</keyword>
<keyword id="KW-0472">Membrane</keyword>
<keyword id="KW-0511">Multifunctional enzyme</keyword>
<keyword id="KW-0520">NAD</keyword>
<keyword id="KW-0874">Quinone</keyword>
<keyword id="KW-1185">Reference proteome</keyword>
<keyword id="KW-1278">Translocase</keyword>
<keyword id="KW-0813">Transport</keyword>
<keyword id="KW-0830">Ubiquinone</keyword>
<gene>
    <name evidence="1" type="primary">nuoC</name>
    <name evidence="1" type="synonym">nuoCD</name>
    <name evidence="1" type="synonym">nuoD</name>
    <name type="ordered locus">Ecok1_21800</name>
    <name type="ORF">APECO1_4279</name>
</gene>
<name>NUOCD_ECOK1</name>
<reference key="1">
    <citation type="journal article" date="2007" name="J. Bacteriol.">
        <title>The genome sequence of avian pathogenic Escherichia coli strain O1:K1:H7 shares strong similarities with human extraintestinal pathogenic E. coli genomes.</title>
        <authorList>
            <person name="Johnson T.J."/>
            <person name="Kariyawasam S."/>
            <person name="Wannemuehler Y."/>
            <person name="Mangiamele P."/>
            <person name="Johnson S.J."/>
            <person name="Doetkott C."/>
            <person name="Skyberg J.A."/>
            <person name="Lynne A.M."/>
            <person name="Johnson J.R."/>
            <person name="Nolan L.K."/>
        </authorList>
    </citation>
    <scope>NUCLEOTIDE SEQUENCE [LARGE SCALE GENOMIC DNA]</scope>
</reference>